<gene>
    <name type="primary">RNASE1</name>
    <name type="synonym">RNS1</name>
</gene>
<feature type="signal peptide" evidence="1">
    <location>
        <begin position="1"/>
        <end position="28"/>
    </location>
</feature>
<feature type="chain" id="PRO_0000030934" description="Ribonuclease pancreatic">
    <location>
        <begin position="29"/>
        <end position="156"/>
    </location>
</feature>
<feature type="region of interest" description="Disordered" evidence="3">
    <location>
        <begin position="33"/>
        <end position="53"/>
    </location>
</feature>
<feature type="compositionally biased region" description="Basic and acidic residues" evidence="3">
    <location>
        <begin position="33"/>
        <end position="43"/>
    </location>
</feature>
<feature type="active site" description="Proton acceptor" evidence="1">
    <location>
        <position position="40"/>
    </location>
</feature>
<feature type="active site" description="Proton donor" evidence="1">
    <location>
        <position position="147"/>
    </location>
</feature>
<feature type="binding site" evidence="1">
    <location>
        <position position="35"/>
    </location>
    <ligand>
        <name>substrate</name>
    </ligand>
</feature>
<feature type="binding site" evidence="1">
    <location>
        <position position="38"/>
    </location>
    <ligand>
        <name>substrate</name>
    </ligand>
</feature>
<feature type="binding site" evidence="1">
    <location>
        <begin position="69"/>
        <end position="73"/>
    </location>
    <ligand>
        <name>substrate</name>
    </ligand>
</feature>
<feature type="binding site" evidence="1">
    <location>
        <position position="94"/>
    </location>
    <ligand>
        <name>substrate</name>
    </ligand>
</feature>
<feature type="binding site" evidence="1">
    <location>
        <position position="113"/>
    </location>
    <ligand>
        <name>substrate</name>
    </ligand>
</feature>
<feature type="glycosylation site" description="N-linked (GlcNAc...) asparagine" evidence="2">
    <location>
        <position position="62"/>
    </location>
</feature>
<feature type="glycosylation site" description="N-linked (GlcNAc...) asparagine" evidence="2">
    <location>
        <position position="104"/>
    </location>
</feature>
<feature type="glycosylation site" description="N-linked (GlcNAc...) asparagine" evidence="2">
    <location>
        <position position="116"/>
    </location>
</feature>
<feature type="disulfide bond" evidence="1">
    <location>
        <begin position="54"/>
        <end position="112"/>
    </location>
</feature>
<feature type="disulfide bond" evidence="1">
    <location>
        <begin position="68"/>
        <end position="123"/>
    </location>
</feature>
<feature type="disulfide bond" evidence="1">
    <location>
        <begin position="86"/>
        <end position="138"/>
    </location>
</feature>
<feature type="disulfide bond" evidence="1">
    <location>
        <begin position="93"/>
        <end position="100"/>
    </location>
</feature>
<sequence>MALEKSLVLLPLLVLILLVLGWVQPSLGKESRAKKFQRQHVDSDSSPSSSSTYCNQMMRRRNMTQGRCKPVNTFVHEPLVDVQNVCFQEKVTCKNGQGNCYKSNSSMRITDCRLTNGSRYPNCAYRTSPKERHIIVACEGSPYVPVHFDASVEDST</sequence>
<keyword id="KW-1015">Disulfide bond</keyword>
<keyword id="KW-0255">Endonuclease</keyword>
<keyword id="KW-0325">Glycoprotein</keyword>
<keyword id="KW-0378">Hydrolase</keyword>
<keyword id="KW-0456">Lyase</keyword>
<keyword id="KW-0540">Nuclease</keyword>
<keyword id="KW-1185">Reference proteome</keyword>
<keyword id="KW-0964">Secreted</keyword>
<keyword id="KW-0732">Signal</keyword>
<reference key="1">
    <citation type="journal article" date="2002" name="Nat. Genet.">
        <title>Adaptive evolution of a duplicated pancreatic ribonuclease gene in a leaf-eating monkey.</title>
        <authorList>
            <person name="Zhang J."/>
            <person name="Zhang Y.-P."/>
            <person name="Rosenberg H.F."/>
        </authorList>
    </citation>
    <scope>NUCLEOTIDE SEQUENCE [GENOMIC DNA]</scope>
</reference>
<evidence type="ECO:0000250" key="1"/>
<evidence type="ECO:0000255" key="2"/>
<evidence type="ECO:0000256" key="3">
    <source>
        <dbReference type="SAM" id="MobiDB-lite"/>
    </source>
</evidence>
<evidence type="ECO:0000305" key="4"/>
<proteinExistence type="evidence at transcript level"/>
<comment type="function">
    <text evidence="1">Endonuclease that catalyzes the cleavage of RNA on the 3' side of pyrimidine nucleotides. Acts on single-stranded and double-stranded RNA (By similarity).</text>
</comment>
<comment type="catalytic activity">
    <reaction>
        <text>an [RNA] containing cytidine + H2O = an [RNA]-3'-cytidine-3'-phosphate + a 5'-hydroxy-ribonucleotide-3'-[RNA].</text>
        <dbReference type="EC" id="4.6.1.18"/>
    </reaction>
</comment>
<comment type="catalytic activity">
    <reaction>
        <text>an [RNA] containing uridine + H2O = an [RNA]-3'-uridine-3'-phosphate + a 5'-hydroxy-ribonucleotide-3'-[RNA].</text>
        <dbReference type="EC" id="4.6.1.18"/>
    </reaction>
</comment>
<comment type="subunit">
    <text evidence="1">Monomer. Interacts with and forms tight 1:1 complexes with RNH1. Dimerization of two such complexes may occur. Interaction with RNH1 inhibits this protein (By similarity).</text>
</comment>
<comment type="subcellular location">
    <subcellularLocation>
        <location evidence="1">Secreted</location>
    </subcellularLocation>
</comment>
<comment type="tissue specificity">
    <text>Pancreas and other tissues and body fluids (indicating it may have other physiological functions besides its role in digestion).</text>
</comment>
<comment type="similarity">
    <text evidence="4">Belongs to the pancreatic ribonuclease family.</text>
</comment>
<accession>Q8SQ14</accession>
<organism>
    <name type="scientific">Pan troglodytes</name>
    <name type="common">Chimpanzee</name>
    <dbReference type="NCBI Taxonomy" id="9598"/>
    <lineage>
        <taxon>Eukaryota</taxon>
        <taxon>Metazoa</taxon>
        <taxon>Chordata</taxon>
        <taxon>Craniata</taxon>
        <taxon>Vertebrata</taxon>
        <taxon>Euteleostomi</taxon>
        <taxon>Mammalia</taxon>
        <taxon>Eutheria</taxon>
        <taxon>Euarchontoglires</taxon>
        <taxon>Primates</taxon>
        <taxon>Haplorrhini</taxon>
        <taxon>Catarrhini</taxon>
        <taxon>Hominidae</taxon>
        <taxon>Pan</taxon>
    </lineage>
</organism>
<protein>
    <recommendedName>
        <fullName>Ribonuclease pancreatic</fullName>
        <ecNumber>4.6.1.18</ecNumber>
    </recommendedName>
    <alternativeName>
        <fullName>RNase 1</fullName>
    </alternativeName>
    <alternativeName>
        <fullName>RNase A</fullName>
    </alternativeName>
</protein>
<name>RNAS1_PANTR</name>
<dbReference type="EC" id="4.6.1.18"/>
<dbReference type="EMBL" id="AF449628">
    <property type="protein sequence ID" value="AAL87049.1"/>
    <property type="molecule type" value="Genomic_DNA"/>
</dbReference>
<dbReference type="BMRB" id="Q8SQ14"/>
<dbReference type="SMR" id="Q8SQ14"/>
<dbReference type="FunCoup" id="Q8SQ14">
    <property type="interactions" value="66"/>
</dbReference>
<dbReference type="STRING" id="9598.ENSPTRP00000010360"/>
<dbReference type="GlyCosmos" id="Q8SQ14">
    <property type="glycosylation" value="3 sites, No reported glycans"/>
</dbReference>
<dbReference type="PaxDb" id="9598-ENSPTRP00000010360"/>
<dbReference type="eggNOG" id="ENOG502SQ4K">
    <property type="taxonomic scope" value="Eukaryota"/>
</dbReference>
<dbReference type="InParanoid" id="Q8SQ14"/>
<dbReference type="Proteomes" id="UP000002277">
    <property type="component" value="Unplaced"/>
</dbReference>
<dbReference type="GO" id="GO:0005576">
    <property type="term" value="C:extracellular region"/>
    <property type="evidence" value="ECO:0007669"/>
    <property type="project" value="UniProtKB-SubCell"/>
</dbReference>
<dbReference type="GO" id="GO:0016829">
    <property type="term" value="F:lyase activity"/>
    <property type="evidence" value="ECO:0007669"/>
    <property type="project" value="UniProtKB-KW"/>
</dbReference>
<dbReference type="GO" id="GO:0003676">
    <property type="term" value="F:nucleic acid binding"/>
    <property type="evidence" value="ECO:0007669"/>
    <property type="project" value="InterPro"/>
</dbReference>
<dbReference type="GO" id="GO:0004522">
    <property type="term" value="F:ribonuclease A activity"/>
    <property type="evidence" value="ECO:0007669"/>
    <property type="project" value="UniProtKB-EC"/>
</dbReference>
<dbReference type="GO" id="GO:0004540">
    <property type="term" value="F:RNA nuclease activity"/>
    <property type="evidence" value="ECO:0000318"/>
    <property type="project" value="GO_Central"/>
</dbReference>
<dbReference type="GO" id="GO:0050830">
    <property type="term" value="P:defense response to Gram-positive bacterium"/>
    <property type="evidence" value="ECO:0000318"/>
    <property type="project" value="GO_Central"/>
</dbReference>
<dbReference type="CDD" id="cd06265">
    <property type="entry name" value="RNase_A_canonical"/>
    <property type="match status" value="1"/>
</dbReference>
<dbReference type="FunFam" id="3.10.130.10:FF:000001">
    <property type="entry name" value="Ribonuclease pancreatic"/>
    <property type="match status" value="1"/>
</dbReference>
<dbReference type="Gene3D" id="3.10.130.10">
    <property type="entry name" value="Ribonuclease A-like domain"/>
    <property type="match status" value="1"/>
</dbReference>
<dbReference type="InterPro" id="IPR001427">
    <property type="entry name" value="RNaseA"/>
</dbReference>
<dbReference type="InterPro" id="IPR036816">
    <property type="entry name" value="RNaseA-like_dom_sf"/>
</dbReference>
<dbReference type="InterPro" id="IPR023411">
    <property type="entry name" value="RNaseA_AS"/>
</dbReference>
<dbReference type="InterPro" id="IPR023412">
    <property type="entry name" value="RNaseA_domain"/>
</dbReference>
<dbReference type="PANTHER" id="PTHR11437">
    <property type="entry name" value="RIBONUCLEASE"/>
    <property type="match status" value="1"/>
</dbReference>
<dbReference type="PANTHER" id="PTHR11437:SF24">
    <property type="entry name" value="RIBONUCLEASE PANCREATIC"/>
    <property type="match status" value="1"/>
</dbReference>
<dbReference type="Pfam" id="PF00074">
    <property type="entry name" value="RnaseA"/>
    <property type="match status" value="1"/>
</dbReference>
<dbReference type="PRINTS" id="PR00794">
    <property type="entry name" value="RIBONUCLEASE"/>
</dbReference>
<dbReference type="SMART" id="SM00092">
    <property type="entry name" value="RNAse_Pc"/>
    <property type="match status" value="1"/>
</dbReference>
<dbReference type="SUPFAM" id="SSF54076">
    <property type="entry name" value="RNase A-like"/>
    <property type="match status" value="1"/>
</dbReference>
<dbReference type="PROSITE" id="PS00127">
    <property type="entry name" value="RNASE_PANCREATIC"/>
    <property type="match status" value="1"/>
</dbReference>